<accession>Q3TV70</accession>
<comment type="function">
    <text evidence="1">May act as a repressor of NR2C2-mediated transactivation by suppressing the binding between NR2C2/TR4 and the TR4-response element in target genes.</text>
</comment>
<comment type="subunit">
    <text evidence="1">Interacts with NR2C2/TR4.</text>
</comment>
<comment type="subcellular location">
    <subcellularLocation>
        <location evidence="1">Nucleus</location>
    </subcellularLocation>
</comment>
<comment type="similarity">
    <text evidence="2">Belongs to the NR2C2AP family.</text>
</comment>
<gene>
    <name type="primary">Nr2c2ap</name>
    <name type="synonym">Tra16</name>
</gene>
<feature type="chain" id="PRO_0000295586" description="Nuclear receptor 2C2-associated protein">
    <location>
        <begin position="1"/>
        <end position="140"/>
    </location>
</feature>
<evidence type="ECO:0000250" key="1"/>
<evidence type="ECO:0000305" key="2"/>
<organism>
    <name type="scientific">Mus musculus</name>
    <name type="common">Mouse</name>
    <dbReference type="NCBI Taxonomy" id="10090"/>
    <lineage>
        <taxon>Eukaryota</taxon>
        <taxon>Metazoa</taxon>
        <taxon>Chordata</taxon>
        <taxon>Craniata</taxon>
        <taxon>Vertebrata</taxon>
        <taxon>Euteleostomi</taxon>
        <taxon>Mammalia</taxon>
        <taxon>Eutheria</taxon>
        <taxon>Euarchontoglires</taxon>
        <taxon>Glires</taxon>
        <taxon>Rodentia</taxon>
        <taxon>Myomorpha</taxon>
        <taxon>Muroidea</taxon>
        <taxon>Muridae</taxon>
        <taxon>Murinae</taxon>
        <taxon>Mus</taxon>
        <taxon>Mus</taxon>
    </lineage>
</organism>
<name>NR2CA_MOUSE</name>
<proteinExistence type="evidence at protein level"/>
<protein>
    <recommendedName>
        <fullName>Nuclear receptor 2C2-associated protein</fullName>
    </recommendedName>
    <alternativeName>
        <fullName>TR4 orphan receptor-associated 16 kDa protein</fullName>
    </alternativeName>
</protein>
<reference key="1">
    <citation type="journal article" date="2005" name="Science">
        <title>The transcriptional landscape of the mammalian genome.</title>
        <authorList>
            <person name="Carninci P."/>
            <person name="Kasukawa T."/>
            <person name="Katayama S."/>
            <person name="Gough J."/>
            <person name="Frith M.C."/>
            <person name="Maeda N."/>
            <person name="Oyama R."/>
            <person name="Ravasi T."/>
            <person name="Lenhard B."/>
            <person name="Wells C."/>
            <person name="Kodzius R."/>
            <person name="Shimokawa K."/>
            <person name="Bajic V.B."/>
            <person name="Brenner S.E."/>
            <person name="Batalov S."/>
            <person name="Forrest A.R."/>
            <person name="Zavolan M."/>
            <person name="Davis M.J."/>
            <person name="Wilming L.G."/>
            <person name="Aidinis V."/>
            <person name="Allen J.E."/>
            <person name="Ambesi-Impiombato A."/>
            <person name="Apweiler R."/>
            <person name="Aturaliya R.N."/>
            <person name="Bailey T.L."/>
            <person name="Bansal M."/>
            <person name="Baxter L."/>
            <person name="Beisel K.W."/>
            <person name="Bersano T."/>
            <person name="Bono H."/>
            <person name="Chalk A.M."/>
            <person name="Chiu K.P."/>
            <person name="Choudhary V."/>
            <person name="Christoffels A."/>
            <person name="Clutterbuck D.R."/>
            <person name="Crowe M.L."/>
            <person name="Dalla E."/>
            <person name="Dalrymple B.P."/>
            <person name="de Bono B."/>
            <person name="Della Gatta G."/>
            <person name="di Bernardo D."/>
            <person name="Down T."/>
            <person name="Engstrom P."/>
            <person name="Fagiolini M."/>
            <person name="Faulkner G."/>
            <person name="Fletcher C.F."/>
            <person name="Fukushima T."/>
            <person name="Furuno M."/>
            <person name="Futaki S."/>
            <person name="Gariboldi M."/>
            <person name="Georgii-Hemming P."/>
            <person name="Gingeras T.R."/>
            <person name="Gojobori T."/>
            <person name="Green R.E."/>
            <person name="Gustincich S."/>
            <person name="Harbers M."/>
            <person name="Hayashi Y."/>
            <person name="Hensch T.K."/>
            <person name="Hirokawa N."/>
            <person name="Hill D."/>
            <person name="Huminiecki L."/>
            <person name="Iacono M."/>
            <person name="Ikeo K."/>
            <person name="Iwama A."/>
            <person name="Ishikawa T."/>
            <person name="Jakt M."/>
            <person name="Kanapin A."/>
            <person name="Katoh M."/>
            <person name="Kawasawa Y."/>
            <person name="Kelso J."/>
            <person name="Kitamura H."/>
            <person name="Kitano H."/>
            <person name="Kollias G."/>
            <person name="Krishnan S.P."/>
            <person name="Kruger A."/>
            <person name="Kummerfeld S.K."/>
            <person name="Kurochkin I.V."/>
            <person name="Lareau L.F."/>
            <person name="Lazarevic D."/>
            <person name="Lipovich L."/>
            <person name="Liu J."/>
            <person name="Liuni S."/>
            <person name="McWilliam S."/>
            <person name="Madan Babu M."/>
            <person name="Madera M."/>
            <person name="Marchionni L."/>
            <person name="Matsuda H."/>
            <person name="Matsuzawa S."/>
            <person name="Miki H."/>
            <person name="Mignone F."/>
            <person name="Miyake S."/>
            <person name="Morris K."/>
            <person name="Mottagui-Tabar S."/>
            <person name="Mulder N."/>
            <person name="Nakano N."/>
            <person name="Nakauchi H."/>
            <person name="Ng P."/>
            <person name="Nilsson R."/>
            <person name="Nishiguchi S."/>
            <person name="Nishikawa S."/>
            <person name="Nori F."/>
            <person name="Ohara O."/>
            <person name="Okazaki Y."/>
            <person name="Orlando V."/>
            <person name="Pang K.C."/>
            <person name="Pavan W.J."/>
            <person name="Pavesi G."/>
            <person name="Pesole G."/>
            <person name="Petrovsky N."/>
            <person name="Piazza S."/>
            <person name="Reed J."/>
            <person name="Reid J.F."/>
            <person name="Ring B.Z."/>
            <person name="Ringwald M."/>
            <person name="Rost B."/>
            <person name="Ruan Y."/>
            <person name="Salzberg S.L."/>
            <person name="Sandelin A."/>
            <person name="Schneider C."/>
            <person name="Schoenbach C."/>
            <person name="Sekiguchi K."/>
            <person name="Semple C.A."/>
            <person name="Seno S."/>
            <person name="Sessa L."/>
            <person name="Sheng Y."/>
            <person name="Shibata Y."/>
            <person name="Shimada H."/>
            <person name="Shimada K."/>
            <person name="Silva D."/>
            <person name="Sinclair B."/>
            <person name="Sperling S."/>
            <person name="Stupka E."/>
            <person name="Sugiura K."/>
            <person name="Sultana R."/>
            <person name="Takenaka Y."/>
            <person name="Taki K."/>
            <person name="Tammoja K."/>
            <person name="Tan S.L."/>
            <person name="Tang S."/>
            <person name="Taylor M.S."/>
            <person name="Tegner J."/>
            <person name="Teichmann S.A."/>
            <person name="Ueda H.R."/>
            <person name="van Nimwegen E."/>
            <person name="Verardo R."/>
            <person name="Wei C.L."/>
            <person name="Yagi K."/>
            <person name="Yamanishi H."/>
            <person name="Zabarovsky E."/>
            <person name="Zhu S."/>
            <person name="Zimmer A."/>
            <person name="Hide W."/>
            <person name="Bult C."/>
            <person name="Grimmond S.M."/>
            <person name="Teasdale R.D."/>
            <person name="Liu E.T."/>
            <person name="Brusic V."/>
            <person name="Quackenbush J."/>
            <person name="Wahlestedt C."/>
            <person name="Mattick J.S."/>
            <person name="Hume D.A."/>
            <person name="Kai C."/>
            <person name="Sasaki D."/>
            <person name="Tomaru Y."/>
            <person name="Fukuda S."/>
            <person name="Kanamori-Katayama M."/>
            <person name="Suzuki M."/>
            <person name="Aoki J."/>
            <person name="Arakawa T."/>
            <person name="Iida J."/>
            <person name="Imamura K."/>
            <person name="Itoh M."/>
            <person name="Kato T."/>
            <person name="Kawaji H."/>
            <person name="Kawagashira N."/>
            <person name="Kawashima T."/>
            <person name="Kojima M."/>
            <person name="Kondo S."/>
            <person name="Konno H."/>
            <person name="Nakano K."/>
            <person name="Ninomiya N."/>
            <person name="Nishio T."/>
            <person name="Okada M."/>
            <person name="Plessy C."/>
            <person name="Shibata K."/>
            <person name="Shiraki T."/>
            <person name="Suzuki S."/>
            <person name="Tagami M."/>
            <person name="Waki K."/>
            <person name="Watahiki A."/>
            <person name="Okamura-Oho Y."/>
            <person name="Suzuki H."/>
            <person name="Kawai J."/>
            <person name="Hayashizaki Y."/>
        </authorList>
    </citation>
    <scope>NUCLEOTIDE SEQUENCE [LARGE SCALE MRNA]</scope>
    <source>
        <strain>C57BL/6J</strain>
    </source>
</reference>
<reference key="2">
    <citation type="journal article" date="2010" name="Cell">
        <title>A tissue-specific atlas of mouse protein phosphorylation and expression.</title>
        <authorList>
            <person name="Huttlin E.L."/>
            <person name="Jedrychowski M.P."/>
            <person name="Elias J.E."/>
            <person name="Goswami T."/>
            <person name="Rad R."/>
            <person name="Beausoleil S.A."/>
            <person name="Villen J."/>
            <person name="Haas W."/>
            <person name="Sowa M.E."/>
            <person name="Gygi S.P."/>
        </authorList>
    </citation>
    <scope>IDENTIFICATION BY MASS SPECTROMETRY [LARGE SCALE ANALYSIS]</scope>
    <source>
        <tissue>Brain</tissue>
        <tissue>Kidney</tissue>
        <tissue>Liver</tissue>
        <tissue>Testis</tissue>
    </source>
</reference>
<sequence length="140" mass="15857">MTQSLVCPDTVSRVSSVLNRNSRQFGKKHLFDQDEETCWNSDQGPSQWVSLEFPQCVQITQLQVQFQGGFSSRHSCLEGSRGGEALSKIVDFYPEDTNALQTFSIPTMEVDRLKLTFEDTTDFFGRVVIYHLRVLGEKAG</sequence>
<keyword id="KW-0539">Nucleus</keyword>
<keyword id="KW-1185">Reference proteome</keyword>
<dbReference type="EMBL" id="AK160346">
    <property type="protein sequence ID" value="BAE35750.1"/>
    <property type="molecule type" value="mRNA"/>
</dbReference>
<dbReference type="CCDS" id="CCDS40366.1"/>
<dbReference type="RefSeq" id="NP_001020757.1">
    <property type="nucleotide sequence ID" value="NM_001025586.2"/>
</dbReference>
<dbReference type="RefSeq" id="NP_001020758.1">
    <property type="nucleotide sequence ID" value="NM_001025587.2"/>
</dbReference>
<dbReference type="SMR" id="Q3TV70"/>
<dbReference type="FunCoup" id="Q3TV70">
    <property type="interactions" value="1063"/>
</dbReference>
<dbReference type="STRING" id="10090.ENSMUSP00000092907"/>
<dbReference type="iPTMnet" id="Q3TV70"/>
<dbReference type="PhosphoSitePlus" id="Q3TV70"/>
<dbReference type="PaxDb" id="10090-ENSMUSP00000092907"/>
<dbReference type="PeptideAtlas" id="Q3TV70"/>
<dbReference type="ProteomicsDB" id="253010"/>
<dbReference type="Pumba" id="Q3TV70"/>
<dbReference type="Antibodypedia" id="28401">
    <property type="antibodies" value="153 antibodies from 22 providers"/>
</dbReference>
<dbReference type="DNASU" id="75692"/>
<dbReference type="Ensembl" id="ENSMUST00000095273.7">
    <property type="protein sequence ID" value="ENSMUSP00000092907.6"/>
    <property type="gene ID" value="ENSMUSG00000071078.7"/>
</dbReference>
<dbReference type="GeneID" id="75692"/>
<dbReference type="KEGG" id="mmu:75692"/>
<dbReference type="UCSC" id="uc033jfy.1">
    <property type="organism name" value="mouse"/>
</dbReference>
<dbReference type="AGR" id="MGI:1922942"/>
<dbReference type="CTD" id="126382"/>
<dbReference type="MGI" id="MGI:1922942">
    <property type="gene designation" value="Nr2c2ap"/>
</dbReference>
<dbReference type="VEuPathDB" id="HostDB:ENSMUSG00000071078"/>
<dbReference type="eggNOG" id="ENOG502RZAY">
    <property type="taxonomic scope" value="Eukaryota"/>
</dbReference>
<dbReference type="GeneTree" id="ENSGT00390000017748"/>
<dbReference type="HOGENOM" id="CLU_133965_0_0_1"/>
<dbReference type="InParanoid" id="Q3TV70"/>
<dbReference type="OMA" id="FFGRITV"/>
<dbReference type="OrthoDB" id="10052260at2759"/>
<dbReference type="PhylomeDB" id="Q3TV70"/>
<dbReference type="TreeFam" id="TF300180"/>
<dbReference type="BioGRID-ORCS" id="75692">
    <property type="hits" value="10 hits in 49 CRISPR screens"/>
</dbReference>
<dbReference type="ChiTaRS" id="Nr2c2ap">
    <property type="organism name" value="mouse"/>
</dbReference>
<dbReference type="PRO" id="PR:Q3TV70"/>
<dbReference type="Proteomes" id="UP000000589">
    <property type="component" value="Chromosome 8"/>
</dbReference>
<dbReference type="RNAct" id="Q3TV70">
    <property type="molecule type" value="protein"/>
</dbReference>
<dbReference type="Bgee" id="ENSMUSG00000071078">
    <property type="expression patterns" value="Expressed in ectoplacental cone and 225 other cell types or tissues"/>
</dbReference>
<dbReference type="ExpressionAtlas" id="Q3TV70">
    <property type="expression patterns" value="baseline and differential"/>
</dbReference>
<dbReference type="GO" id="GO:0005654">
    <property type="term" value="C:nucleoplasm"/>
    <property type="evidence" value="ECO:0007669"/>
    <property type="project" value="Ensembl"/>
</dbReference>
<dbReference type="FunFam" id="2.60.120.260:FF:000070">
    <property type="entry name" value="Nuclear receptor 2C2-associated protein"/>
    <property type="match status" value="1"/>
</dbReference>
<dbReference type="Gene3D" id="2.60.120.260">
    <property type="entry name" value="Galactose-binding domain-like"/>
    <property type="match status" value="1"/>
</dbReference>
<dbReference type="InterPro" id="IPR008979">
    <property type="entry name" value="Galactose-bd-like_sf"/>
</dbReference>
<dbReference type="SUPFAM" id="SSF49785">
    <property type="entry name" value="Galactose-binding domain-like"/>
    <property type="match status" value="1"/>
</dbReference>